<sequence>MRITWLGHAAFEVEIDGVNVLIDPFLSGNPKAAKSPDEVDPDLVLVTHGHGDHLGDAVEICKRTGATLVGIYEIAVYAQGQGVENVEEMNIGGTIEVEGLEITQVPAWHSSEIVEDGEIVAGGTPVGYVVSGEEGSVYHAGDTGLSMDMKLIGELYEPEVALLPIGSRFTMGPKEAAKAVELIEPEVAIPMHYGTFPPIEQDPEEFKREVEELGLDVEVVILEPGESYER</sequence>
<reference key="1">
    <citation type="journal article" date="2002" name="Proc. Natl. Acad. Sci. U.S.A.">
        <title>The complete genome of hyperthermophile Methanopyrus kandleri AV19 and monophyly of archaeal methanogens.</title>
        <authorList>
            <person name="Slesarev A.I."/>
            <person name="Mezhevaya K.V."/>
            <person name="Makarova K.S."/>
            <person name="Polushin N.N."/>
            <person name="Shcherbinina O.V."/>
            <person name="Shakhova V.V."/>
            <person name="Belova G.I."/>
            <person name="Aravind L."/>
            <person name="Natale D.A."/>
            <person name="Rogozin I.B."/>
            <person name="Tatusov R.L."/>
            <person name="Wolf Y.I."/>
            <person name="Stetter K.O."/>
            <person name="Malykh A.G."/>
            <person name="Koonin E.V."/>
            <person name="Kozyavkin S.A."/>
        </authorList>
    </citation>
    <scope>NUCLEOTIDE SEQUENCE [LARGE SCALE GENOMIC DNA]</scope>
    <source>
        <strain>AV19 / DSM 6324 / JCM 9639 / NBRC 100938</strain>
    </source>
</reference>
<dbReference type="EMBL" id="AE009439">
    <property type="protein sequence ID" value="AAM02755.1"/>
    <property type="molecule type" value="Genomic_DNA"/>
</dbReference>
<dbReference type="RefSeq" id="WP_011019910.1">
    <property type="nucleotide sequence ID" value="NC_003551.1"/>
</dbReference>
<dbReference type="SMR" id="Q8TV58"/>
<dbReference type="STRING" id="190192.MK1542"/>
<dbReference type="PaxDb" id="190192-MK1542"/>
<dbReference type="EnsemblBacteria" id="AAM02755">
    <property type="protein sequence ID" value="AAM02755"/>
    <property type="gene ID" value="MK1542"/>
</dbReference>
<dbReference type="GeneID" id="1478137"/>
<dbReference type="KEGG" id="mka:MK1542"/>
<dbReference type="PATRIC" id="fig|190192.8.peg.1703"/>
<dbReference type="HOGENOM" id="CLU_070010_4_0_2"/>
<dbReference type="InParanoid" id="Q8TV58"/>
<dbReference type="OrthoDB" id="28313at2157"/>
<dbReference type="Proteomes" id="UP000001826">
    <property type="component" value="Chromosome"/>
</dbReference>
<dbReference type="GO" id="GO:0016787">
    <property type="term" value="F:hydrolase activity"/>
    <property type="evidence" value="ECO:0007669"/>
    <property type="project" value="UniProtKB-UniRule"/>
</dbReference>
<dbReference type="Gene3D" id="3.60.15.10">
    <property type="entry name" value="Ribonuclease Z/Hydroxyacylglutathione hydrolase-like"/>
    <property type="match status" value="1"/>
</dbReference>
<dbReference type="HAMAP" id="MF_00457">
    <property type="entry name" value="UPF0173"/>
    <property type="match status" value="1"/>
</dbReference>
<dbReference type="InterPro" id="IPR001279">
    <property type="entry name" value="Metallo-B-lactamas"/>
</dbReference>
<dbReference type="InterPro" id="IPR036866">
    <property type="entry name" value="RibonucZ/Hydroxyglut_hydro"/>
</dbReference>
<dbReference type="InterPro" id="IPR022877">
    <property type="entry name" value="UPF0173"/>
</dbReference>
<dbReference type="InterPro" id="IPR050114">
    <property type="entry name" value="UPF0173_UPF0282_UlaG_hydrolase"/>
</dbReference>
<dbReference type="NCBIfam" id="NF001911">
    <property type="entry name" value="PRK00685.1"/>
    <property type="match status" value="1"/>
</dbReference>
<dbReference type="PANTHER" id="PTHR43546:SF3">
    <property type="entry name" value="UPF0173 METAL-DEPENDENT HYDROLASE MJ1163"/>
    <property type="match status" value="1"/>
</dbReference>
<dbReference type="PANTHER" id="PTHR43546">
    <property type="entry name" value="UPF0173 METAL-DEPENDENT HYDROLASE MJ1163-RELATED"/>
    <property type="match status" value="1"/>
</dbReference>
<dbReference type="Pfam" id="PF13483">
    <property type="entry name" value="Lactamase_B_3"/>
    <property type="match status" value="1"/>
</dbReference>
<dbReference type="SMART" id="SM00849">
    <property type="entry name" value="Lactamase_B"/>
    <property type="match status" value="1"/>
</dbReference>
<dbReference type="SUPFAM" id="SSF56281">
    <property type="entry name" value="Metallo-hydrolase/oxidoreductase"/>
    <property type="match status" value="1"/>
</dbReference>
<accession>Q8TV58</accession>
<feature type="chain" id="PRO_0000156394" description="UPF0173 metal-dependent hydrolase MK1542">
    <location>
        <begin position="1"/>
        <end position="230"/>
    </location>
</feature>
<comment type="similarity">
    <text evidence="1">Belongs to the UPF0173 family.</text>
</comment>
<protein>
    <recommendedName>
        <fullName evidence="1">UPF0173 metal-dependent hydrolase MK1542</fullName>
    </recommendedName>
</protein>
<keyword id="KW-0378">Hydrolase</keyword>
<keyword id="KW-1185">Reference proteome</keyword>
<proteinExistence type="inferred from homology"/>
<name>Y1542_METKA</name>
<organism>
    <name type="scientific">Methanopyrus kandleri (strain AV19 / DSM 6324 / JCM 9639 / NBRC 100938)</name>
    <dbReference type="NCBI Taxonomy" id="190192"/>
    <lineage>
        <taxon>Archaea</taxon>
        <taxon>Methanobacteriati</taxon>
        <taxon>Methanobacteriota</taxon>
        <taxon>Methanomada group</taxon>
        <taxon>Methanopyri</taxon>
        <taxon>Methanopyrales</taxon>
        <taxon>Methanopyraceae</taxon>
        <taxon>Methanopyrus</taxon>
    </lineage>
</organism>
<gene>
    <name type="ordered locus">MK1542</name>
</gene>
<evidence type="ECO:0000255" key="1">
    <source>
        <dbReference type="HAMAP-Rule" id="MF_00457"/>
    </source>
</evidence>